<proteinExistence type="inferred from homology"/>
<name>RL24_LEGPA</name>
<evidence type="ECO:0000255" key="1">
    <source>
        <dbReference type="HAMAP-Rule" id="MF_01326"/>
    </source>
</evidence>
<evidence type="ECO:0000305" key="2"/>
<feature type="chain" id="PRO_0000241613" description="Large ribosomal subunit protein uL24">
    <location>
        <begin position="1"/>
        <end position="109"/>
    </location>
</feature>
<protein>
    <recommendedName>
        <fullName evidence="1">Large ribosomal subunit protein uL24</fullName>
    </recommendedName>
    <alternativeName>
        <fullName evidence="2">50S ribosomal protein L24</fullName>
    </alternativeName>
</protein>
<comment type="function">
    <text evidence="1">One of two assembly initiator proteins, it binds directly to the 5'-end of the 23S rRNA, where it nucleates assembly of the 50S subunit.</text>
</comment>
<comment type="function">
    <text evidence="1">One of the proteins that surrounds the polypeptide exit tunnel on the outside of the subunit.</text>
</comment>
<comment type="subunit">
    <text evidence="1">Part of the 50S ribosomal subunit.</text>
</comment>
<comment type="similarity">
    <text evidence="1">Belongs to the universal ribosomal protein uL24 family.</text>
</comment>
<accession>Q5X848</accession>
<sequence>MKRIKSGDEVIVIAGKSKGHIGKVLRVVDDAVVVEGGNLIKKHIKPNPQKPENKGGIIAREAPLHVSNVAHYNPVTKKADKVGFKYLESNGVSKKVRYYKSNNEIIDRI</sequence>
<reference key="1">
    <citation type="journal article" date="2004" name="Nat. Genet.">
        <title>Evidence in the Legionella pneumophila genome for exploitation of host cell functions and high genome plasticity.</title>
        <authorList>
            <person name="Cazalet C."/>
            <person name="Rusniok C."/>
            <person name="Brueggemann H."/>
            <person name="Zidane N."/>
            <person name="Magnier A."/>
            <person name="Ma L."/>
            <person name="Tichit M."/>
            <person name="Jarraud S."/>
            <person name="Bouchier C."/>
            <person name="Vandenesch F."/>
            <person name="Kunst F."/>
            <person name="Etienne J."/>
            <person name="Glaser P."/>
            <person name="Buchrieser C."/>
        </authorList>
    </citation>
    <scope>NUCLEOTIDE SEQUENCE [LARGE SCALE GENOMIC DNA]</scope>
    <source>
        <strain>Paris</strain>
    </source>
</reference>
<dbReference type="EMBL" id="CR628336">
    <property type="protein sequence ID" value="CAH11553.1"/>
    <property type="molecule type" value="Genomic_DNA"/>
</dbReference>
<dbReference type="RefSeq" id="WP_011213010.1">
    <property type="nucleotide sequence ID" value="NC_006368.1"/>
</dbReference>
<dbReference type="SMR" id="Q5X848"/>
<dbReference type="KEGG" id="lpp:lpp0405"/>
<dbReference type="LegioList" id="lpp0405"/>
<dbReference type="HOGENOM" id="CLU_093315_2_2_6"/>
<dbReference type="GO" id="GO:1990904">
    <property type="term" value="C:ribonucleoprotein complex"/>
    <property type="evidence" value="ECO:0007669"/>
    <property type="project" value="UniProtKB-KW"/>
</dbReference>
<dbReference type="GO" id="GO:0005840">
    <property type="term" value="C:ribosome"/>
    <property type="evidence" value="ECO:0007669"/>
    <property type="project" value="UniProtKB-KW"/>
</dbReference>
<dbReference type="GO" id="GO:0019843">
    <property type="term" value="F:rRNA binding"/>
    <property type="evidence" value="ECO:0007669"/>
    <property type="project" value="UniProtKB-UniRule"/>
</dbReference>
<dbReference type="GO" id="GO:0003735">
    <property type="term" value="F:structural constituent of ribosome"/>
    <property type="evidence" value="ECO:0007669"/>
    <property type="project" value="InterPro"/>
</dbReference>
<dbReference type="GO" id="GO:0006412">
    <property type="term" value="P:translation"/>
    <property type="evidence" value="ECO:0007669"/>
    <property type="project" value="UniProtKB-UniRule"/>
</dbReference>
<dbReference type="CDD" id="cd06089">
    <property type="entry name" value="KOW_RPL26"/>
    <property type="match status" value="1"/>
</dbReference>
<dbReference type="Gene3D" id="2.30.30.30">
    <property type="match status" value="1"/>
</dbReference>
<dbReference type="HAMAP" id="MF_01326_B">
    <property type="entry name" value="Ribosomal_uL24_B"/>
    <property type="match status" value="1"/>
</dbReference>
<dbReference type="InterPro" id="IPR005824">
    <property type="entry name" value="KOW"/>
</dbReference>
<dbReference type="InterPro" id="IPR014722">
    <property type="entry name" value="Rib_uL2_dom2"/>
</dbReference>
<dbReference type="InterPro" id="IPR003256">
    <property type="entry name" value="Ribosomal_uL24"/>
</dbReference>
<dbReference type="InterPro" id="IPR005825">
    <property type="entry name" value="Ribosomal_uL24_CS"/>
</dbReference>
<dbReference type="InterPro" id="IPR041988">
    <property type="entry name" value="Ribosomal_uL24_KOW"/>
</dbReference>
<dbReference type="InterPro" id="IPR008991">
    <property type="entry name" value="Translation_prot_SH3-like_sf"/>
</dbReference>
<dbReference type="NCBIfam" id="TIGR01079">
    <property type="entry name" value="rplX_bact"/>
    <property type="match status" value="1"/>
</dbReference>
<dbReference type="PANTHER" id="PTHR12903">
    <property type="entry name" value="MITOCHONDRIAL RIBOSOMAL PROTEIN L24"/>
    <property type="match status" value="1"/>
</dbReference>
<dbReference type="Pfam" id="PF00467">
    <property type="entry name" value="KOW"/>
    <property type="match status" value="1"/>
</dbReference>
<dbReference type="Pfam" id="PF17136">
    <property type="entry name" value="ribosomal_L24"/>
    <property type="match status" value="1"/>
</dbReference>
<dbReference type="SMART" id="SM00739">
    <property type="entry name" value="KOW"/>
    <property type="match status" value="1"/>
</dbReference>
<dbReference type="SUPFAM" id="SSF50104">
    <property type="entry name" value="Translation proteins SH3-like domain"/>
    <property type="match status" value="1"/>
</dbReference>
<dbReference type="PROSITE" id="PS01108">
    <property type="entry name" value="RIBOSOMAL_L24"/>
    <property type="match status" value="1"/>
</dbReference>
<organism>
    <name type="scientific">Legionella pneumophila (strain Paris)</name>
    <dbReference type="NCBI Taxonomy" id="297246"/>
    <lineage>
        <taxon>Bacteria</taxon>
        <taxon>Pseudomonadati</taxon>
        <taxon>Pseudomonadota</taxon>
        <taxon>Gammaproteobacteria</taxon>
        <taxon>Legionellales</taxon>
        <taxon>Legionellaceae</taxon>
        <taxon>Legionella</taxon>
    </lineage>
</organism>
<keyword id="KW-0687">Ribonucleoprotein</keyword>
<keyword id="KW-0689">Ribosomal protein</keyword>
<keyword id="KW-0694">RNA-binding</keyword>
<keyword id="KW-0699">rRNA-binding</keyword>
<gene>
    <name evidence="1" type="primary">rplX</name>
    <name type="ordered locus">lpp0405</name>
</gene>